<evidence type="ECO:0000250" key="1">
    <source>
        <dbReference type="UniProtKB" id="Q99KP6"/>
    </source>
</evidence>
<evidence type="ECO:0000250" key="2">
    <source>
        <dbReference type="UniProtKB" id="Q9JMJ4"/>
    </source>
</evidence>
<evidence type="ECO:0000269" key="3">
    <source>
    </source>
</evidence>
<evidence type="ECO:0000269" key="4">
    <source>
    </source>
</evidence>
<evidence type="ECO:0000269" key="5">
    <source>
    </source>
</evidence>
<evidence type="ECO:0000269" key="6">
    <source>
    </source>
</evidence>
<evidence type="ECO:0000269" key="7">
    <source>
    </source>
</evidence>
<evidence type="ECO:0000269" key="8">
    <source>
    </source>
</evidence>
<evidence type="ECO:0000269" key="9">
    <source>
    </source>
</evidence>
<evidence type="ECO:0000269" key="10">
    <source>
    </source>
</evidence>
<evidence type="ECO:0000269" key="11">
    <source>
    </source>
</evidence>
<evidence type="ECO:0000269" key="12">
    <source>
    </source>
</evidence>
<evidence type="ECO:0000269" key="13">
    <source>
    </source>
</evidence>
<evidence type="ECO:0000269" key="14">
    <source>
    </source>
</evidence>
<evidence type="ECO:0000269" key="15">
    <source>
    </source>
</evidence>
<evidence type="ECO:0000269" key="16">
    <source>
    </source>
</evidence>
<evidence type="ECO:0000269" key="17">
    <source>
    </source>
</evidence>
<evidence type="ECO:0000269" key="18">
    <source>
    </source>
</evidence>
<evidence type="ECO:0000269" key="19">
    <source>
    </source>
</evidence>
<evidence type="ECO:0000269" key="20">
    <source>
    </source>
</evidence>
<evidence type="ECO:0000269" key="21">
    <source>
    </source>
</evidence>
<evidence type="ECO:0000269" key="22">
    <source>
    </source>
</evidence>
<evidence type="ECO:0000269" key="23">
    <source>
    </source>
</evidence>
<evidence type="ECO:0000269" key="24">
    <source>
    </source>
</evidence>
<evidence type="ECO:0000269" key="25">
    <source>
    </source>
</evidence>
<evidence type="ECO:0000269" key="26">
    <source>
    </source>
</evidence>
<evidence type="ECO:0000269" key="27">
    <source>
    </source>
</evidence>
<evidence type="ECO:0000269" key="28">
    <source>
    </source>
</evidence>
<evidence type="ECO:0000269" key="29">
    <source>
    </source>
</evidence>
<evidence type="ECO:0000269" key="30">
    <source>
    </source>
</evidence>
<evidence type="ECO:0000269" key="31">
    <source ref="4"/>
</evidence>
<evidence type="ECO:0000269" key="32">
    <source ref="5"/>
</evidence>
<evidence type="ECO:0000303" key="33">
    <source>
    </source>
</evidence>
<evidence type="ECO:0000303" key="34">
    <source>
    </source>
</evidence>
<evidence type="ECO:0000303" key="35">
    <source>
    </source>
</evidence>
<evidence type="ECO:0000303" key="36">
    <source>
    </source>
</evidence>
<evidence type="ECO:0000303" key="37">
    <source>
    </source>
</evidence>
<evidence type="ECO:0000303" key="38">
    <source>
    </source>
</evidence>
<evidence type="ECO:0000305" key="39"/>
<evidence type="ECO:0000312" key="40">
    <source>
        <dbReference type="HGNC" id="HGNC:17896"/>
    </source>
</evidence>
<evidence type="ECO:0007744" key="41">
    <source>
        <dbReference type="PDB" id="4LG8"/>
    </source>
</evidence>
<evidence type="ECO:0007744" key="42">
    <source>
        <dbReference type="PDB" id="5MQF"/>
    </source>
</evidence>
<evidence type="ECO:0007744" key="43">
    <source>
        <dbReference type="PDB" id="5XJC"/>
    </source>
</evidence>
<evidence type="ECO:0007744" key="44">
    <source>
        <dbReference type="PDB" id="5YZG"/>
    </source>
</evidence>
<evidence type="ECO:0007744" key="45">
    <source>
        <dbReference type="PDB" id="5Z56"/>
    </source>
</evidence>
<evidence type="ECO:0007744" key="46">
    <source>
        <dbReference type="PDB" id="5Z57"/>
    </source>
</evidence>
<evidence type="ECO:0007744" key="47">
    <source>
        <dbReference type="PDB" id="6QDV"/>
    </source>
</evidence>
<evidence type="ECO:0007744" key="48">
    <source>
    </source>
</evidence>
<evidence type="ECO:0007744" key="49">
    <source>
    </source>
</evidence>
<evidence type="ECO:0007744" key="50">
    <source>
    </source>
</evidence>
<evidence type="ECO:0007829" key="51">
    <source>
        <dbReference type="PDB" id="4LG8"/>
    </source>
</evidence>
<evidence type="ECO:0007829" key="52">
    <source>
        <dbReference type="PDB" id="6ID0"/>
    </source>
</evidence>
<evidence type="ECO:0007829" key="53">
    <source>
        <dbReference type="PDB" id="6ID1"/>
    </source>
</evidence>
<comment type="function">
    <text evidence="1 2 4 5 8 9 10 11 12 13 15 20 23 25 26 27 28 29 37 38">Ubiquitin-protein ligase which is a core component of several complexes mainly involved pre-mRNA splicing and DNA repair. Required for pre-mRNA splicing as component of the spliceosome (PubMed:28076346, PubMed:28502770, PubMed:29301961, PubMed:29360106, PubMed:30705154). Core component of the PRP19C/Prp19 complex/NTC/Nineteen complex which is part of the spliceosome and participates in its assembly, its remodeling and is required for its activity. During assembly of the spliceosome, mediates 'Lys-63'-linked polyubiquitination of the U4 spliceosomal protein PRPF3. Ubiquitination of PRPF3 allows its recognition by the U5 component PRPF8 and stabilizes the U4/U5/U6 tri-snRNP spliceosomal complex (PubMed:20595234). Recruited to RNA polymerase II C-terminal domain (CTD) and the pre-mRNA, it may also couple the transcriptional and spliceosomal machineries (PubMed:21536736). The XAB2 complex, which contains PRPF19, is also involved in pre-mRNA splicing, transcription and transcription-coupled repair (PubMed:17981804). Beside its role in pre-mRNA splicing PRPF19, as part of the PRP19-CDC5L complex, plays a role in the DNA damage response/DDR. It is recruited to the sites of DNA damage by the RPA complex where PRPF19 directly ubiquitinates RPA1 and RPA2. 'Lys-63'-linked polyubiquitination of the RPA complex allows the recruitment of the ATR-ATRIP complex and the activation of ATR, a master regulator of the DNA damage response (PubMed:24332808). May also play a role in DNA double-strand break (DSB) repair by recruiting the repair factor SETMAR to altered DNA (PubMed:18263876). As part of the PSO4 complex may also be involved in the DNA interstrand cross-links/ICLs repair process (PubMed:16223718). In addition, may also mediate 'Lys-48'-linked polyubiquitination of substrates and play a role in proteasomal degradation (PubMed:11435423). May play a role in the biogenesis of lipid droplets (By similarity). May play a role in neural differentiation possibly through its function as part of the spliceosome (By similarity).</text>
</comment>
<comment type="catalytic activity">
    <reaction evidence="5">
        <text>S-ubiquitinyl-[E2 ubiquitin-conjugating enzyme]-L-cysteine + [acceptor protein]-L-lysine = [E2 ubiquitin-conjugating enzyme]-L-cysteine + N(6)-ubiquitinyl-[acceptor protein]-L-lysine.</text>
        <dbReference type="EC" id="2.3.2.27"/>
    </reaction>
</comment>
<comment type="pathway">
    <text evidence="5">Protein modification; protein ubiquitination.</text>
</comment>
<comment type="subunit">
    <text evidence="1 2 6 8 9 10 11 14 15 16 17 18 19 20 21 22 23 24 25 26 27 28 29 30">Homotetramer. Component of activated, catalytic and post-catalytic spliceosomes (PubMed:28076346, PubMed:28502770, PubMed:29301961, PubMed:29360106, PubMed:30705154). Component of the Prp19 complex/PRP19C/Nineteen complex/NTC and related complexes described as PRP19-CDC5L splicing complex and PSO4 complex. A homotetramer of PRPF19, CDC5L, PLRG1 and BCAS2 constitute the core of those complexes. The interaction with CDC5L, PLRG1 and BCAS2 is direct within this core complex. At least three less stably associated proteins CTNNBL1, CWC15 and HSPA8 are found in the Prp19 complex. The Prp19 complex associates with the spliceosome during its assembly and remodeling recruiting additional proteins. Component of the XAB2 complex, a multimeric protein complex composed of XAB2, PRPF19, AQR, ZNF830, ISY1, and PPIE. Interacts with CWC22 and EIF4A3 in an RNA-independent manner. Interacts with RPA1 and RPA2; the PRP19-CDC5L complex is recruited to the sites of DNA repair where it interacts with the replication protein A complex (RPA). Interacts with SETMAR; required for SETMAR recruitment to site of DNA damage. Interacts with U2AF2; the interaction is direct and recruits the Prp19 complex to RNA polymerase II C-terminal domain (CTD) and the pre-mRNA. Interacts with PRPF3. Interacts with APEX1, DNTT and PSMB4. Interacts with PSMC5 (By similarity). Interacts with KNSTRN (PubMed:24718257). Interacts (via N-terminus) with CDC5L (By similarity). Interacts with KHDC4 (PubMed:19641227). Interacts with USB1 (PubMed:23022480). Interacts with DDX41 (PubMed:36229594).</text>
</comment>
<comment type="interaction">
    <interactant intactId="EBI-395746">
        <id>Q9UMS4</id>
    </interactant>
    <interactant intactId="EBI-1050106">
        <id>O75934</id>
        <label>BCAS2</label>
    </interactant>
    <organismsDiffer>false</organismsDiffer>
    <experiments>10</experiments>
</comment>
<comment type="interaction">
    <interactant intactId="EBI-395746">
        <id>Q9UMS4</id>
    </interactant>
    <interactant intactId="EBI-2557812">
        <id>O60508</id>
        <label>CDC40</label>
    </interactant>
    <organismsDiffer>false</organismsDiffer>
    <experiments>5</experiments>
</comment>
<comment type="interaction">
    <interactant intactId="EBI-395746">
        <id>Q9UMS4</id>
    </interactant>
    <interactant intactId="EBI-374880">
        <id>Q99459</id>
        <label>CDC5L</label>
    </interactant>
    <organismsDiffer>false</organismsDiffer>
    <experiments>14</experiments>
</comment>
<comment type="interaction">
    <interactant intactId="EBI-395746">
        <id>Q9UMS4</id>
    </interactant>
    <interactant intactId="EBI-3928124">
        <id>Q96DF8</id>
        <label>ESS2</label>
    </interactant>
    <organismsDiffer>false</organismsDiffer>
    <experiments>3</experiments>
</comment>
<comment type="interaction">
    <interactant intactId="EBI-395746">
        <id>Q9UMS4</id>
    </interactant>
    <interactant intactId="EBI-1051504">
        <id>O43660</id>
        <label>PLRG1</label>
    </interactant>
    <organismsDiffer>false</organismsDiffer>
    <experiments>4</experiments>
</comment>
<comment type="interaction">
    <interactant intactId="EBI-395746">
        <id>Q9UMS4</id>
    </interactant>
    <interactant intactId="EBI-538479">
        <id>Q6P2Q9</id>
        <label>PRPF8</label>
    </interactant>
    <organismsDiffer>false</organismsDiffer>
    <experiments>3</experiments>
</comment>
<comment type="interaction">
    <interactant intactId="EBI-395746">
        <id>Q9UMS4</id>
    </interactant>
    <interactant intactId="EBI-721525">
        <id>P98175</id>
        <label>RBM10</label>
    </interactant>
    <organismsDiffer>false</organismsDiffer>
    <experiments>2</experiments>
</comment>
<comment type="interaction">
    <interactant intactId="EBI-395746">
        <id>Q9UMS4</id>
    </interactant>
    <interactant intactId="EBI-714003">
        <id>P52756</id>
        <label>RBM5</label>
    </interactant>
    <organismsDiffer>false</organismsDiffer>
    <experiments>8</experiments>
</comment>
<comment type="subcellular location">
    <subcellularLocation>
        <location evidence="4 7 16 18 25 26 27 28 29">Nucleus</location>
    </subcellularLocation>
    <subcellularLocation>
        <location evidence="4">Nucleus</location>
        <location evidence="4">Nucleoplasm</location>
    </subcellularLocation>
    <subcellularLocation>
        <location evidence="4">Cytoplasm</location>
        <location evidence="4">Cytoskeleton</location>
        <location evidence="4">Spindle</location>
    </subcellularLocation>
    <subcellularLocation>
        <location evidence="5">Cytoplasm</location>
    </subcellularLocation>
    <subcellularLocation>
        <location evidence="1">Lipid droplet</location>
    </subcellularLocation>
    <text evidence="4 15">Nucleoplasmic in interphase cells. Irregularly distributed in anaphase cells. In prophase cells, uniformly distributed, but not associated with condensing chromosomes. Found in extrachromosomal regions in metaphase cells. Mainly localized to the mitotic spindle apparatus when chromosomes segregate during anaphase. When nuclei reform during late telophase, uniformly distributed in daughter cells and displays no preferred association with decondensing chromatin. Recruited on damaged DNA at sites of double-strand break.</text>
</comment>
<comment type="tissue specificity">
    <text evidence="3 4 5 8 12">Ubiquitous. Weakly expressed in senescent cells of different tissue origins. Highly expressed in tumor cell lines.</text>
</comment>
<comment type="induction">
    <text evidence="8">By gamma irradiation and chemical mutagens but not by UV irradiation.</text>
</comment>
<comment type="domain">
    <text evidence="23">The 7 WD repeats are necessary and sufficient to support interaction with the RPA complex.</text>
</comment>
<comment type="similarity">
    <text evidence="39">Belongs to the WD repeat PRP19 family.</text>
</comment>
<name>PRP19_HUMAN</name>
<sequence length="504" mass="55181">MSLICSISNEVPEHPCVSPVSNHVYERRLIEKYIAENGTDPINNQPLSEEQLIDIKVAHPIRPKPPSATSIPAILKALQDEWDAVMLHSFTLRQQLQTTRQELSHALYQHDAACRVIARLTKEVTAAREALATLKPQAGLIVPQAVPSSQPSVVGAGEPMDLGELVGMTPEIIQKLQDKATVLTTERKKRGKTVPEELVKPEELSKYRQVASHVGLHSASIPGILALDLCPSDTNKILTGGADKNVVVFDKSSEQILATLKGHTKKVTSVVFHPSQDLVFSASPDATIRIWSVPNASCVQVVRAHESAVTGLSLHATGDYLLSSSDDQYWAFSDIQTGRVLTKVTDETSGCSLTCAQFHPDGLIFGTGTMDSQIKIWDLKERTNVANFPGHSGPITSIAFSENGYYLATAADDSSVKLWDLRKLKNFKTLQLDNNFEVKSLIFDQSGTYLALGGTDVQIYICKQWTEILHFTEHSGLTTGVAFGHHAKFIASTGMDRSLKFYSL</sequence>
<keyword id="KW-0002">3D-structure</keyword>
<keyword id="KW-0007">Acetylation</keyword>
<keyword id="KW-0963">Cytoplasm</keyword>
<keyword id="KW-0206">Cytoskeleton</keyword>
<keyword id="KW-0903">Direct protein sequencing</keyword>
<keyword id="KW-0227">DNA damage</keyword>
<keyword id="KW-0234">DNA repair</keyword>
<keyword id="KW-0551">Lipid droplet</keyword>
<keyword id="KW-0507">mRNA processing</keyword>
<keyword id="KW-0508">mRNA splicing</keyword>
<keyword id="KW-0539">Nucleus</keyword>
<keyword id="KW-1267">Proteomics identification</keyword>
<keyword id="KW-1185">Reference proteome</keyword>
<keyword id="KW-0677">Repeat</keyword>
<keyword id="KW-0747">Spliceosome</keyword>
<keyword id="KW-0808">Transferase</keyword>
<keyword id="KW-0833">Ubl conjugation pathway</keyword>
<keyword id="KW-0853">WD repeat</keyword>
<accession>Q9UMS4</accession>
<protein>
    <recommendedName>
        <fullName evidence="39">Pre-mRNA-processing factor 19</fullName>
        <ecNumber evidence="5">2.3.2.27</ecNumber>
    </recommendedName>
    <alternativeName>
        <fullName evidence="33">Nuclear matrix protein 200</fullName>
    </alternativeName>
    <alternativeName>
        <fullName evidence="35">PRP19/PSO4 homolog</fullName>
        <shortName evidence="35">hPso4</shortName>
    </alternativeName>
    <alternativeName>
        <fullName evidence="39">RING-type E3 ubiquitin transferase PRP19</fullName>
    </alternativeName>
    <alternativeName>
        <fullName evidence="36">Senescence evasion factor</fullName>
    </alternativeName>
</protein>
<feature type="initiator methionine" description="Removed" evidence="31 32 48 50">
    <location>
        <position position="1"/>
    </location>
</feature>
<feature type="chain" id="PRO_0000051145" description="Pre-mRNA-processing factor 19">
    <location>
        <begin position="2"/>
        <end position="504"/>
    </location>
</feature>
<feature type="domain" description="U-box">
    <location>
        <begin position="2"/>
        <end position="73"/>
    </location>
</feature>
<feature type="repeat" description="WD 1">
    <location>
        <begin position="219"/>
        <end position="259"/>
    </location>
</feature>
<feature type="repeat" description="WD 2">
    <location>
        <begin position="262"/>
        <end position="301"/>
    </location>
</feature>
<feature type="repeat" description="WD 3">
    <location>
        <begin position="304"/>
        <end position="345"/>
    </location>
</feature>
<feature type="repeat" description="WD 4">
    <location>
        <begin position="348"/>
        <end position="387"/>
    </location>
</feature>
<feature type="repeat" description="WD 5">
    <location>
        <begin position="390"/>
        <end position="429"/>
    </location>
</feature>
<feature type="repeat" description="WD 6">
    <location>
        <begin position="433"/>
        <end position="472"/>
    </location>
</feature>
<feature type="repeat" description="WD 7">
    <location>
        <begin position="473"/>
        <end position="503"/>
    </location>
</feature>
<feature type="region of interest" description="May mediate interaction with PSMC5" evidence="1">
    <location>
        <begin position="68"/>
        <end position="223"/>
    </location>
</feature>
<feature type="modified residue" description="N-acetylserine" evidence="31 32 48 50">
    <location>
        <position position="2"/>
    </location>
</feature>
<feature type="modified residue" description="N6-acetyllysine" evidence="49">
    <location>
        <position position="122"/>
    </location>
</feature>
<feature type="modified residue" description="N6-acetyllysine" evidence="1">
    <location>
        <position position="179"/>
    </location>
</feature>
<feature type="modified residue" description="N6-acetyllysine" evidence="1">
    <location>
        <position position="244"/>
    </location>
</feature>
<feature type="modified residue" description="N6-acetyllysine" evidence="49">
    <location>
        <position position="261"/>
    </location>
</feature>
<feature type="mutagenesis site" description="Loss of interaction with the RPA complex and loss of recruitment to sites of DNA damage." evidence="23">
    <original>Y</original>
    <variation>A</variation>
    <location>
        <position position="405"/>
    </location>
</feature>
<feature type="turn" evidence="53">
    <location>
        <begin position="6"/>
        <end position="8"/>
    </location>
</feature>
<feature type="strand" evidence="53">
    <location>
        <begin position="13"/>
        <end position="17"/>
    </location>
</feature>
<feature type="strand" evidence="53">
    <location>
        <begin position="19"/>
        <end position="21"/>
    </location>
</feature>
<feature type="strand" evidence="53">
    <location>
        <begin position="24"/>
        <end position="26"/>
    </location>
</feature>
<feature type="helix" evidence="53">
    <location>
        <begin position="27"/>
        <end position="36"/>
    </location>
</feature>
<feature type="strand" evidence="53">
    <location>
        <begin position="37"/>
        <end position="39"/>
    </location>
</feature>
<feature type="turn" evidence="53">
    <location>
        <begin position="41"/>
        <end position="43"/>
    </location>
</feature>
<feature type="turn" evidence="53">
    <location>
        <begin position="49"/>
        <end position="51"/>
    </location>
</feature>
<feature type="strand" evidence="53">
    <location>
        <begin position="53"/>
        <end position="56"/>
    </location>
</feature>
<feature type="strand" evidence="52">
    <location>
        <begin position="59"/>
        <end position="61"/>
    </location>
</feature>
<feature type="helix" evidence="53">
    <location>
        <begin position="70"/>
        <end position="74"/>
    </location>
</feature>
<feature type="helix" evidence="53">
    <location>
        <begin position="76"/>
        <end position="132"/>
    </location>
</feature>
<feature type="helix" evidence="51">
    <location>
        <begin position="201"/>
        <end position="204"/>
    </location>
</feature>
<feature type="strand" evidence="51">
    <location>
        <begin position="208"/>
        <end position="213"/>
    </location>
</feature>
<feature type="strand" evidence="51">
    <location>
        <begin position="219"/>
        <end position="221"/>
    </location>
</feature>
<feature type="strand" evidence="51">
    <location>
        <begin position="224"/>
        <end position="230"/>
    </location>
</feature>
<feature type="strand" evidence="51">
    <location>
        <begin position="233"/>
        <end position="241"/>
    </location>
</feature>
<feature type="strand" evidence="51">
    <location>
        <begin position="246"/>
        <end position="250"/>
    </location>
</feature>
<feature type="turn" evidence="51">
    <location>
        <begin position="251"/>
        <end position="254"/>
    </location>
</feature>
<feature type="strand" evidence="51">
    <location>
        <begin position="255"/>
        <end position="260"/>
    </location>
</feature>
<feature type="strand" evidence="51">
    <location>
        <begin position="269"/>
        <end position="272"/>
    </location>
</feature>
<feature type="strand" evidence="51">
    <location>
        <begin position="276"/>
        <end position="282"/>
    </location>
</feature>
<feature type="strand" evidence="51">
    <location>
        <begin position="288"/>
        <end position="292"/>
    </location>
</feature>
<feature type="turn" evidence="51">
    <location>
        <begin position="293"/>
        <end position="296"/>
    </location>
</feature>
<feature type="strand" evidence="51">
    <location>
        <begin position="297"/>
        <end position="302"/>
    </location>
</feature>
<feature type="strand" evidence="51">
    <location>
        <begin position="309"/>
        <end position="314"/>
    </location>
</feature>
<feature type="strand" evidence="51">
    <location>
        <begin position="318"/>
        <end position="325"/>
    </location>
</feature>
<feature type="strand" evidence="51">
    <location>
        <begin position="328"/>
        <end position="334"/>
    </location>
</feature>
<feature type="turn" evidence="51">
    <location>
        <begin position="335"/>
        <end position="337"/>
    </location>
</feature>
<feature type="strand" evidence="51">
    <location>
        <begin position="340"/>
        <end position="345"/>
    </location>
</feature>
<feature type="turn" evidence="51">
    <location>
        <begin position="347"/>
        <end position="349"/>
    </location>
</feature>
<feature type="strand" evidence="51">
    <location>
        <begin position="353"/>
        <end position="358"/>
    </location>
</feature>
<feature type="strand" evidence="51">
    <location>
        <begin position="362"/>
        <end position="369"/>
    </location>
</feature>
<feature type="strand" evidence="51">
    <location>
        <begin position="374"/>
        <end position="378"/>
    </location>
</feature>
<feature type="turn" evidence="51">
    <location>
        <begin position="379"/>
        <end position="382"/>
    </location>
</feature>
<feature type="strand" evidence="51">
    <location>
        <begin position="383"/>
        <end position="388"/>
    </location>
</feature>
<feature type="strand" evidence="51">
    <location>
        <begin position="395"/>
        <end position="400"/>
    </location>
</feature>
<feature type="strand" evidence="51">
    <location>
        <begin position="404"/>
        <end position="411"/>
    </location>
</feature>
<feature type="strand" evidence="51">
    <location>
        <begin position="414"/>
        <end position="420"/>
    </location>
</feature>
<feature type="turn" evidence="51">
    <location>
        <begin position="421"/>
        <end position="424"/>
    </location>
</feature>
<feature type="strand" evidence="51">
    <location>
        <begin position="425"/>
        <end position="431"/>
    </location>
</feature>
<feature type="strand" evidence="51">
    <location>
        <begin position="438"/>
        <end position="443"/>
    </location>
</feature>
<feature type="strand" evidence="51">
    <location>
        <begin position="447"/>
        <end position="461"/>
    </location>
</feature>
<feature type="turn" evidence="51">
    <location>
        <begin position="462"/>
        <end position="465"/>
    </location>
</feature>
<feature type="strand" evidence="51">
    <location>
        <begin position="466"/>
        <end position="471"/>
    </location>
</feature>
<feature type="strand" evidence="51">
    <location>
        <begin position="474"/>
        <end position="476"/>
    </location>
</feature>
<feature type="strand" evidence="51">
    <location>
        <begin position="478"/>
        <end position="483"/>
    </location>
</feature>
<feature type="helix" evidence="51">
    <location>
        <begin position="485"/>
        <end position="487"/>
    </location>
</feature>
<feature type="strand" evidence="51">
    <location>
        <begin position="490"/>
        <end position="494"/>
    </location>
</feature>
<feature type="strand" evidence="51">
    <location>
        <begin position="499"/>
        <end position="503"/>
    </location>
</feature>
<gene>
    <name evidence="40" type="primary">PRPF19</name>
    <name evidence="33" type="synonym">NMP200</name>
    <name evidence="34" type="synonym">PRP19</name>
    <name evidence="36" type="synonym">SNEV</name>
</gene>
<dbReference type="EC" id="2.3.2.27" evidence="5"/>
<dbReference type="EMBL" id="AJ131186">
    <property type="protein sequence ID" value="CAB51857.1"/>
    <property type="molecule type" value="mRNA"/>
</dbReference>
<dbReference type="EMBL" id="BC008719">
    <property type="protein sequence ID" value="AAH08719.1"/>
    <property type="molecule type" value="mRNA"/>
</dbReference>
<dbReference type="EMBL" id="BC018665">
    <property type="protein sequence ID" value="AAH18665.1"/>
    <property type="molecule type" value="mRNA"/>
</dbReference>
<dbReference type="EMBL" id="BC018698">
    <property type="protein sequence ID" value="AAH18698.1"/>
    <property type="molecule type" value="mRNA"/>
</dbReference>
<dbReference type="CCDS" id="CCDS7995.1"/>
<dbReference type="RefSeq" id="NP_055317.1">
    <property type="nucleotide sequence ID" value="NM_014502.5"/>
</dbReference>
<dbReference type="PDB" id="4LG8">
    <property type="method" value="X-ray"/>
    <property type="resolution" value="1.89 A"/>
    <property type="chains" value="A=169-504"/>
</dbReference>
<dbReference type="PDB" id="5MQF">
    <property type="method" value="EM"/>
    <property type="resolution" value="5.90 A"/>
    <property type="chains" value="G/H/I/J=1-504"/>
</dbReference>
<dbReference type="PDB" id="5XJC">
    <property type="method" value="EM"/>
    <property type="resolution" value="3.60 A"/>
    <property type="chains" value="q/r/s/t=1-504"/>
</dbReference>
<dbReference type="PDB" id="5YZG">
    <property type="method" value="EM"/>
    <property type="resolution" value="4.10 A"/>
    <property type="chains" value="q/r/s/t=1-504"/>
</dbReference>
<dbReference type="PDB" id="5Z56">
    <property type="method" value="EM"/>
    <property type="resolution" value="5.10 A"/>
    <property type="chains" value="q/r/s/t=1-504"/>
</dbReference>
<dbReference type="PDB" id="5Z57">
    <property type="method" value="EM"/>
    <property type="resolution" value="6.50 A"/>
    <property type="chains" value="q/r/s/t=1-504"/>
</dbReference>
<dbReference type="PDB" id="6FF7">
    <property type="method" value="EM"/>
    <property type="resolution" value="4.50 A"/>
    <property type="chains" value="G/H/I/J=1-504"/>
</dbReference>
<dbReference type="PDB" id="6ICZ">
    <property type="method" value="EM"/>
    <property type="resolution" value="3.00 A"/>
    <property type="chains" value="q/r/s/t=1-504"/>
</dbReference>
<dbReference type="PDB" id="6ID0">
    <property type="method" value="EM"/>
    <property type="resolution" value="2.90 A"/>
    <property type="chains" value="q/r/s/t=1-504"/>
</dbReference>
<dbReference type="PDB" id="6ID1">
    <property type="method" value="EM"/>
    <property type="resolution" value="2.86 A"/>
    <property type="chains" value="q/r/s/t=1-504"/>
</dbReference>
<dbReference type="PDB" id="6QDV">
    <property type="method" value="EM"/>
    <property type="resolution" value="3.30 A"/>
    <property type="chains" value="t/u/v/w=1-504"/>
</dbReference>
<dbReference type="PDB" id="7A5P">
    <property type="method" value="EM"/>
    <property type="resolution" value="5.00 A"/>
    <property type="chains" value="G/H/I/J=1-504"/>
</dbReference>
<dbReference type="PDB" id="7W59">
    <property type="method" value="EM"/>
    <property type="resolution" value="3.60 A"/>
    <property type="chains" value="q/r/s/t=1-504"/>
</dbReference>
<dbReference type="PDB" id="7W5A">
    <property type="method" value="EM"/>
    <property type="resolution" value="3.60 A"/>
    <property type="chains" value="q/r/s/t=1-504"/>
</dbReference>
<dbReference type="PDB" id="7W5B">
    <property type="method" value="EM"/>
    <property type="resolution" value="4.30 A"/>
    <property type="chains" value="q/r/s/t=1-504"/>
</dbReference>
<dbReference type="PDB" id="8C6J">
    <property type="method" value="EM"/>
    <property type="resolution" value="2.80 A"/>
    <property type="chains" value="t/u/v/w=1-504"/>
</dbReference>
<dbReference type="PDB" id="8CH6">
    <property type="method" value="EM"/>
    <property type="resolution" value="5.90 A"/>
    <property type="chains" value="K/M/R/v=1-504"/>
</dbReference>
<dbReference type="PDB" id="8I0T">
    <property type="method" value="EM"/>
    <property type="resolution" value="3.00 A"/>
    <property type="chains" value="q/r/s/t=1-504"/>
</dbReference>
<dbReference type="PDB" id="8I0U">
    <property type="method" value="EM"/>
    <property type="resolution" value="3.30 A"/>
    <property type="chains" value="q/r/s/t=1-504"/>
</dbReference>
<dbReference type="PDB" id="8I0V">
    <property type="method" value="EM"/>
    <property type="resolution" value="3.00 A"/>
    <property type="chains" value="q/r/s/t=1-504"/>
</dbReference>
<dbReference type="PDB" id="8I0W">
    <property type="method" value="EM"/>
    <property type="resolution" value="3.40 A"/>
    <property type="chains" value="q/r/s/t=1-504"/>
</dbReference>
<dbReference type="PDB" id="8RO2">
    <property type="method" value="EM"/>
    <property type="resolution" value="3.50 A"/>
    <property type="chains" value="q/r/s/t=1-504"/>
</dbReference>
<dbReference type="PDB" id="9FMD">
    <property type="method" value="EM"/>
    <property type="resolution" value="3.30 A"/>
    <property type="chains" value="q/r/s/t=1-504"/>
</dbReference>
<dbReference type="PDBsum" id="4LG8"/>
<dbReference type="PDBsum" id="5MQF"/>
<dbReference type="PDBsum" id="5XJC"/>
<dbReference type="PDBsum" id="5YZG"/>
<dbReference type="PDBsum" id="5Z56"/>
<dbReference type="PDBsum" id="5Z57"/>
<dbReference type="PDBsum" id="6FF7"/>
<dbReference type="PDBsum" id="6ICZ"/>
<dbReference type="PDBsum" id="6ID0"/>
<dbReference type="PDBsum" id="6ID1"/>
<dbReference type="PDBsum" id="6QDV"/>
<dbReference type="PDBsum" id="7A5P"/>
<dbReference type="PDBsum" id="7W59"/>
<dbReference type="PDBsum" id="7W5A"/>
<dbReference type="PDBsum" id="7W5B"/>
<dbReference type="PDBsum" id="8C6J"/>
<dbReference type="PDBsum" id="8CH6"/>
<dbReference type="PDBsum" id="8I0T"/>
<dbReference type="PDBsum" id="8I0U"/>
<dbReference type="PDBsum" id="8I0V"/>
<dbReference type="PDBsum" id="8I0W"/>
<dbReference type="PDBsum" id="8RO2"/>
<dbReference type="PDBsum" id="9FMD"/>
<dbReference type="EMDB" id="EMD-16452"/>
<dbReference type="EMDB" id="EMD-16658"/>
<dbReference type="EMDB" id="EMD-19399"/>
<dbReference type="EMDB" id="EMD-32317"/>
<dbReference type="EMDB" id="EMD-32319"/>
<dbReference type="EMDB" id="EMD-32321"/>
<dbReference type="EMDB" id="EMD-35109"/>
<dbReference type="EMDB" id="EMD-35110"/>
<dbReference type="EMDB" id="EMD-35111"/>
<dbReference type="EMDB" id="EMD-35113"/>
<dbReference type="EMDB" id="EMD-3545"/>
<dbReference type="EMDB" id="EMD-4525"/>
<dbReference type="EMDB" id="EMD-6721"/>
<dbReference type="EMDB" id="EMD-6864"/>
<dbReference type="EMDB" id="EMD-6889"/>
<dbReference type="EMDB" id="EMD-6890"/>
<dbReference type="EMDB" id="EMD-9645"/>
<dbReference type="EMDB" id="EMD-9646"/>
<dbReference type="EMDB" id="EMD-9647"/>
<dbReference type="SMR" id="Q9UMS4"/>
<dbReference type="BioGRID" id="118151">
    <property type="interactions" value="463"/>
</dbReference>
<dbReference type="ComplexPortal" id="CPX-5824">
    <property type="entry name" value="PRP19-CDC5L complex"/>
</dbReference>
<dbReference type="CORUM" id="Q9UMS4"/>
<dbReference type="DIP" id="DIP-32978N"/>
<dbReference type="FunCoup" id="Q9UMS4">
    <property type="interactions" value="3170"/>
</dbReference>
<dbReference type="IntAct" id="Q9UMS4">
    <property type="interactions" value="159"/>
</dbReference>
<dbReference type="MINT" id="Q9UMS4"/>
<dbReference type="STRING" id="9606.ENSP00000227524"/>
<dbReference type="MoonDB" id="Q9UMS4">
    <property type="type" value="Predicted"/>
</dbReference>
<dbReference type="GlyCosmos" id="Q9UMS4">
    <property type="glycosylation" value="7 sites, 2 glycans"/>
</dbReference>
<dbReference type="GlyGen" id="Q9UMS4">
    <property type="glycosylation" value="7 sites, 2 O-linked glycans (7 sites)"/>
</dbReference>
<dbReference type="iPTMnet" id="Q9UMS4"/>
<dbReference type="MetOSite" id="Q9UMS4"/>
<dbReference type="PhosphoSitePlus" id="Q9UMS4"/>
<dbReference type="SwissPalm" id="Q9UMS4"/>
<dbReference type="BioMuta" id="PRPF19"/>
<dbReference type="DMDM" id="55976619"/>
<dbReference type="REPRODUCTION-2DPAGE" id="IPI00004968"/>
<dbReference type="CPTAC" id="CPTAC-576"/>
<dbReference type="CPTAC" id="CPTAC-577"/>
<dbReference type="jPOST" id="Q9UMS4"/>
<dbReference type="MassIVE" id="Q9UMS4"/>
<dbReference type="PaxDb" id="9606-ENSP00000227524"/>
<dbReference type="PeptideAtlas" id="Q9UMS4"/>
<dbReference type="ProteomicsDB" id="85207"/>
<dbReference type="Pumba" id="Q9UMS4"/>
<dbReference type="Antibodypedia" id="3247">
    <property type="antibodies" value="330 antibodies from 35 providers"/>
</dbReference>
<dbReference type="DNASU" id="27339"/>
<dbReference type="Ensembl" id="ENST00000227524.9">
    <property type="protein sequence ID" value="ENSP00000227524.4"/>
    <property type="gene ID" value="ENSG00000110107.9"/>
</dbReference>
<dbReference type="GeneID" id="27339"/>
<dbReference type="KEGG" id="hsa:27339"/>
<dbReference type="MANE-Select" id="ENST00000227524.9">
    <property type="protein sequence ID" value="ENSP00000227524.4"/>
    <property type="RefSeq nucleotide sequence ID" value="NM_014502.5"/>
    <property type="RefSeq protein sequence ID" value="NP_055317.1"/>
</dbReference>
<dbReference type="UCSC" id="uc001nqf.4">
    <property type="organism name" value="human"/>
</dbReference>
<dbReference type="AGR" id="HGNC:17896"/>
<dbReference type="CTD" id="27339"/>
<dbReference type="DisGeNET" id="27339"/>
<dbReference type="GeneCards" id="PRPF19"/>
<dbReference type="HGNC" id="HGNC:17896">
    <property type="gene designation" value="PRPF19"/>
</dbReference>
<dbReference type="HPA" id="ENSG00000110107">
    <property type="expression patterns" value="Low tissue specificity"/>
</dbReference>
<dbReference type="MIM" id="608330">
    <property type="type" value="gene"/>
</dbReference>
<dbReference type="neXtProt" id="NX_Q9UMS4"/>
<dbReference type="OpenTargets" id="ENSG00000110107"/>
<dbReference type="PharmGKB" id="PA134941355"/>
<dbReference type="VEuPathDB" id="HostDB:ENSG00000110107"/>
<dbReference type="eggNOG" id="KOG0289">
    <property type="taxonomic scope" value="Eukaryota"/>
</dbReference>
<dbReference type="GeneTree" id="ENSGT00940000153662"/>
<dbReference type="HOGENOM" id="CLU_023894_1_1_1"/>
<dbReference type="InParanoid" id="Q9UMS4"/>
<dbReference type="OMA" id="SLDQHWA"/>
<dbReference type="OrthoDB" id="687049at2759"/>
<dbReference type="PAN-GO" id="Q9UMS4">
    <property type="GO annotations" value="5 GO annotations based on evolutionary models"/>
</dbReference>
<dbReference type="PhylomeDB" id="Q9UMS4"/>
<dbReference type="TreeFam" id="TF105919"/>
<dbReference type="PathwayCommons" id="Q9UMS4"/>
<dbReference type="Reactome" id="R-HSA-6781823">
    <property type="pathway name" value="Formation of TC-NER Pre-Incision Complex"/>
</dbReference>
<dbReference type="Reactome" id="R-HSA-6781827">
    <property type="pathway name" value="Transcription-Coupled Nucleotide Excision Repair (TC-NER)"/>
</dbReference>
<dbReference type="Reactome" id="R-HSA-6782135">
    <property type="pathway name" value="Dual incision in TC-NER"/>
</dbReference>
<dbReference type="Reactome" id="R-HSA-6782210">
    <property type="pathway name" value="Gap-filling DNA repair synthesis and ligation in TC-NER"/>
</dbReference>
<dbReference type="Reactome" id="R-HSA-72163">
    <property type="pathway name" value="mRNA Splicing - Major Pathway"/>
</dbReference>
<dbReference type="SignaLink" id="Q9UMS4"/>
<dbReference type="SIGNOR" id="Q9UMS4"/>
<dbReference type="UniPathway" id="UPA00143"/>
<dbReference type="BioGRID-ORCS" id="27339">
    <property type="hits" value="859 hits in 1169 CRISPR screens"/>
</dbReference>
<dbReference type="CD-CODE" id="232F8A39">
    <property type="entry name" value="P-body"/>
</dbReference>
<dbReference type="CD-CODE" id="804901D1">
    <property type="entry name" value="Nuclear speckle"/>
</dbReference>
<dbReference type="CD-CODE" id="91857CE7">
    <property type="entry name" value="Nucleolus"/>
</dbReference>
<dbReference type="ChiTaRS" id="PRPF19">
    <property type="organism name" value="human"/>
</dbReference>
<dbReference type="EvolutionaryTrace" id="Q9UMS4"/>
<dbReference type="GeneWiki" id="PRPF19"/>
<dbReference type="GenomeRNAi" id="27339"/>
<dbReference type="Pharos" id="Q9UMS4">
    <property type="development level" value="Tbio"/>
</dbReference>
<dbReference type="PRO" id="PR:Q9UMS4"/>
<dbReference type="Proteomes" id="UP000005640">
    <property type="component" value="Chromosome 11"/>
</dbReference>
<dbReference type="RNAct" id="Q9UMS4">
    <property type="molecule type" value="protein"/>
</dbReference>
<dbReference type="Bgee" id="ENSG00000110107">
    <property type="expression patterns" value="Expressed in pons and 207 other cell types or tissues"/>
</dbReference>
<dbReference type="ExpressionAtlas" id="Q9UMS4">
    <property type="expression patterns" value="baseline and differential"/>
</dbReference>
<dbReference type="GO" id="GO:0071013">
    <property type="term" value="C:catalytic step 2 spliceosome"/>
    <property type="evidence" value="ECO:0000314"/>
    <property type="project" value="UniProtKB"/>
</dbReference>
<dbReference type="GO" id="GO:0005737">
    <property type="term" value="C:cytoplasm"/>
    <property type="evidence" value="ECO:0000314"/>
    <property type="project" value="MGI"/>
</dbReference>
<dbReference type="GO" id="GO:0005811">
    <property type="term" value="C:lipid droplet"/>
    <property type="evidence" value="ECO:0007669"/>
    <property type="project" value="UniProtKB-SubCell"/>
</dbReference>
<dbReference type="GO" id="GO:0016020">
    <property type="term" value="C:membrane"/>
    <property type="evidence" value="ECO:0007005"/>
    <property type="project" value="UniProtKB"/>
</dbReference>
<dbReference type="GO" id="GO:0016607">
    <property type="term" value="C:nuclear speck"/>
    <property type="evidence" value="ECO:0000314"/>
    <property type="project" value="UniProtKB"/>
</dbReference>
<dbReference type="GO" id="GO:0005654">
    <property type="term" value="C:nucleoplasm"/>
    <property type="evidence" value="ECO:0000304"/>
    <property type="project" value="Reactome"/>
</dbReference>
<dbReference type="GO" id="GO:0005634">
    <property type="term" value="C:nucleus"/>
    <property type="evidence" value="ECO:0000314"/>
    <property type="project" value="UniProtKB"/>
</dbReference>
<dbReference type="GO" id="GO:0000974">
    <property type="term" value="C:Prp19 complex"/>
    <property type="evidence" value="ECO:0000314"/>
    <property type="project" value="UniProtKB"/>
</dbReference>
<dbReference type="GO" id="GO:0035861">
    <property type="term" value="C:site of double-strand break"/>
    <property type="evidence" value="ECO:0000314"/>
    <property type="project" value="UniProtKB"/>
</dbReference>
<dbReference type="GO" id="GO:0005819">
    <property type="term" value="C:spindle"/>
    <property type="evidence" value="ECO:0007669"/>
    <property type="project" value="UniProtKB-SubCell"/>
</dbReference>
<dbReference type="GO" id="GO:0005681">
    <property type="term" value="C:spliceosomal complex"/>
    <property type="evidence" value="ECO:0000353"/>
    <property type="project" value="ComplexPortal"/>
</dbReference>
<dbReference type="GO" id="GO:0071006">
    <property type="term" value="C:U2-type catalytic step 1 spliceosome"/>
    <property type="evidence" value="ECO:0000318"/>
    <property type="project" value="GO_Central"/>
</dbReference>
<dbReference type="GO" id="GO:0071007">
    <property type="term" value="C:U2-type catalytic step 2 spliceosome"/>
    <property type="evidence" value="ECO:0000314"/>
    <property type="project" value="UniProtKB"/>
</dbReference>
<dbReference type="GO" id="GO:0042802">
    <property type="term" value="F:identical protein binding"/>
    <property type="evidence" value="ECO:0000353"/>
    <property type="project" value="BHF-UCL"/>
</dbReference>
<dbReference type="GO" id="GO:0061630">
    <property type="term" value="F:ubiquitin protein ligase activity"/>
    <property type="evidence" value="ECO:0000314"/>
    <property type="project" value="MGI"/>
</dbReference>
<dbReference type="GO" id="GO:0004842">
    <property type="term" value="F:ubiquitin-protein transferase activity"/>
    <property type="evidence" value="ECO:0000318"/>
    <property type="project" value="GO_Central"/>
</dbReference>
<dbReference type="GO" id="GO:0034450">
    <property type="term" value="F:ubiquitin-ubiquitin ligase activity"/>
    <property type="evidence" value="ECO:0000314"/>
    <property type="project" value="MGI"/>
</dbReference>
<dbReference type="GO" id="GO:0000077">
    <property type="term" value="P:DNA damage checkpoint signaling"/>
    <property type="evidence" value="ECO:0000315"/>
    <property type="project" value="UniProtKB"/>
</dbReference>
<dbReference type="GO" id="GO:0006303">
    <property type="term" value="P:double-strand break repair via nonhomologous end joining"/>
    <property type="evidence" value="ECO:0000315"/>
    <property type="project" value="UniProtKB"/>
</dbReference>
<dbReference type="GO" id="GO:0001833">
    <property type="term" value="P:inner cell mass cell proliferation"/>
    <property type="evidence" value="ECO:0007669"/>
    <property type="project" value="Ensembl"/>
</dbReference>
<dbReference type="GO" id="GO:0008610">
    <property type="term" value="P:lipid biosynthetic process"/>
    <property type="evidence" value="ECO:0007669"/>
    <property type="project" value="Ensembl"/>
</dbReference>
<dbReference type="GO" id="GO:0000398">
    <property type="term" value="P:mRNA splicing, via spliceosome"/>
    <property type="evidence" value="ECO:0000314"/>
    <property type="project" value="UniProtKB"/>
</dbReference>
<dbReference type="GO" id="GO:0048026">
    <property type="term" value="P:positive regulation of mRNA splicing, via spliceosome"/>
    <property type="evidence" value="ECO:0007669"/>
    <property type="project" value="Ensembl"/>
</dbReference>
<dbReference type="GO" id="GO:0010498">
    <property type="term" value="P:proteasomal protein catabolic process"/>
    <property type="evidence" value="ECO:0000315"/>
    <property type="project" value="UniProtKB"/>
</dbReference>
<dbReference type="GO" id="GO:0070534">
    <property type="term" value="P:protein K63-linked ubiquitination"/>
    <property type="evidence" value="ECO:0000315"/>
    <property type="project" value="UniProtKB"/>
</dbReference>
<dbReference type="GO" id="GO:0008104">
    <property type="term" value="P:protein localization"/>
    <property type="evidence" value="ECO:0000315"/>
    <property type="project" value="UniProtKB"/>
</dbReference>
<dbReference type="GO" id="GO:0000209">
    <property type="term" value="P:protein polyubiquitination"/>
    <property type="evidence" value="ECO:0000314"/>
    <property type="project" value="MGI"/>
</dbReference>
<dbReference type="GO" id="GO:0000245">
    <property type="term" value="P:spliceosomal complex assembly"/>
    <property type="evidence" value="ECO:0000315"/>
    <property type="project" value="BHF-UCL"/>
</dbReference>
<dbReference type="GO" id="GO:0000244">
    <property type="term" value="P:spliceosomal tri-snRNP complex assembly"/>
    <property type="evidence" value="ECO:0000314"/>
    <property type="project" value="UniProtKB"/>
</dbReference>
<dbReference type="CDD" id="cd16656">
    <property type="entry name" value="RING-Ubox_PRP19"/>
    <property type="match status" value="1"/>
</dbReference>
<dbReference type="CDD" id="cd00200">
    <property type="entry name" value="WD40"/>
    <property type="match status" value="1"/>
</dbReference>
<dbReference type="DisProt" id="DP01161"/>
<dbReference type="FunFam" id="2.130.10.10:FF:000043">
    <property type="entry name" value="pre-mRNA-processing factor 19"/>
    <property type="match status" value="1"/>
</dbReference>
<dbReference type="FunFam" id="3.30.40.10:FF:000027">
    <property type="entry name" value="Pre-mRNA-processing factor 19, putative"/>
    <property type="match status" value="1"/>
</dbReference>
<dbReference type="Gene3D" id="2.130.10.10">
    <property type="entry name" value="YVTN repeat-like/Quinoprotein amine dehydrogenase"/>
    <property type="match status" value="1"/>
</dbReference>
<dbReference type="Gene3D" id="3.30.40.10">
    <property type="entry name" value="Zinc/RING finger domain, C3HC4 (zinc finger)"/>
    <property type="match status" value="1"/>
</dbReference>
<dbReference type="InterPro" id="IPR020472">
    <property type="entry name" value="G-protein_beta_WD-40_rep"/>
</dbReference>
<dbReference type="InterPro" id="IPR013915">
    <property type="entry name" value="Pre-mRNA_splic_Prp19_cc"/>
</dbReference>
<dbReference type="InterPro" id="IPR038959">
    <property type="entry name" value="Prp19"/>
</dbReference>
<dbReference type="InterPro" id="IPR055340">
    <property type="entry name" value="RING-Ubox_PRP19"/>
</dbReference>
<dbReference type="InterPro" id="IPR003613">
    <property type="entry name" value="Ubox_domain"/>
</dbReference>
<dbReference type="InterPro" id="IPR015943">
    <property type="entry name" value="WD40/YVTN_repeat-like_dom_sf"/>
</dbReference>
<dbReference type="InterPro" id="IPR019775">
    <property type="entry name" value="WD40_repeat_CS"/>
</dbReference>
<dbReference type="InterPro" id="IPR036322">
    <property type="entry name" value="WD40_repeat_dom_sf"/>
</dbReference>
<dbReference type="InterPro" id="IPR001680">
    <property type="entry name" value="WD40_rpt"/>
</dbReference>
<dbReference type="InterPro" id="IPR013083">
    <property type="entry name" value="Znf_RING/FYVE/PHD"/>
</dbReference>
<dbReference type="PANTHER" id="PTHR43995">
    <property type="entry name" value="PRE-MRNA-PROCESSING FACTOR 19"/>
    <property type="match status" value="1"/>
</dbReference>
<dbReference type="PANTHER" id="PTHR43995:SF1">
    <property type="entry name" value="PRE-MRNA-PROCESSING FACTOR 19"/>
    <property type="match status" value="1"/>
</dbReference>
<dbReference type="Pfam" id="PF08606">
    <property type="entry name" value="Prp19"/>
    <property type="match status" value="1"/>
</dbReference>
<dbReference type="Pfam" id="PF04564">
    <property type="entry name" value="U-box"/>
    <property type="match status" value="1"/>
</dbReference>
<dbReference type="Pfam" id="PF24814">
    <property type="entry name" value="WD40_Prp19"/>
    <property type="match status" value="1"/>
</dbReference>
<dbReference type="PRINTS" id="PR00320">
    <property type="entry name" value="GPROTEINBRPT"/>
</dbReference>
<dbReference type="SMART" id="SM00504">
    <property type="entry name" value="Ubox"/>
    <property type="match status" value="1"/>
</dbReference>
<dbReference type="SMART" id="SM00320">
    <property type="entry name" value="WD40"/>
    <property type="match status" value="7"/>
</dbReference>
<dbReference type="SUPFAM" id="SSF57850">
    <property type="entry name" value="RING/U-box"/>
    <property type="match status" value="1"/>
</dbReference>
<dbReference type="SUPFAM" id="SSF50978">
    <property type="entry name" value="WD40 repeat-like"/>
    <property type="match status" value="1"/>
</dbReference>
<dbReference type="PROSITE" id="PS51698">
    <property type="entry name" value="U_BOX"/>
    <property type="match status" value="1"/>
</dbReference>
<dbReference type="PROSITE" id="PS00678">
    <property type="entry name" value="WD_REPEATS_1"/>
    <property type="match status" value="1"/>
</dbReference>
<dbReference type="PROSITE" id="PS50082">
    <property type="entry name" value="WD_REPEATS_2"/>
    <property type="match status" value="4"/>
</dbReference>
<dbReference type="PROSITE" id="PS50294">
    <property type="entry name" value="WD_REPEATS_REGION"/>
    <property type="match status" value="1"/>
</dbReference>
<reference key="1">
    <citation type="journal article" date="2000" name="Exp. Cell Res.">
        <title>hNMP 200: a novel human common nuclear matrix protein combining structural and regulatory functions.</title>
        <authorList>
            <person name="Gotzmann J."/>
            <person name="Gerner C."/>
            <person name="Meissner M."/>
            <person name="Holzmann K."/>
            <person name="Grimm R."/>
            <person name="Mikulits W."/>
            <person name="Sauermann G."/>
        </authorList>
    </citation>
    <scope>NUCLEOTIDE SEQUENCE [MRNA]</scope>
    <scope>PROTEIN SEQUENCE OF 32-40; 100-115; 179-187; 192-199 AND 334-342</scope>
    <scope>FUNCTION</scope>
    <scope>SUBCELLULAR LOCATION</scope>
    <scope>TISSUE SPECIFICITY</scope>
    <scope>CHROMOSOMAL LOCATION</scope>
    <source>
        <tissue>Cervix</tissue>
    </source>
</reference>
<reference key="2">
    <citation type="journal article" date="2003" name="Proc. Natl. Acad. Sci. U.S.A.">
        <title>Role of human Pso4 in mammalian DNA repair and association with terminal deoxynucleotidyl transferase.</title>
        <authorList>
            <person name="Mahajan K.N."/>
            <person name="Mitchell B.S."/>
        </authorList>
    </citation>
    <scope>NUCLEOTIDE SEQUENCE [MRNA]</scope>
    <scope>FUNCTION</scope>
    <scope>TISSUE SPECIFICITY</scope>
    <scope>INDUCTION</scope>
    <scope>INTERACTION WITH DNTT</scope>
</reference>
<reference key="3">
    <citation type="journal article" date="2004" name="Genome Res.">
        <title>The status, quality, and expansion of the NIH full-length cDNA project: the Mammalian Gene Collection (MGC).</title>
        <authorList>
            <consortium name="The MGC Project Team"/>
        </authorList>
    </citation>
    <scope>NUCLEOTIDE SEQUENCE [LARGE SCALE MRNA]</scope>
    <source>
        <tissue>Muscle</tissue>
    </source>
</reference>
<reference key="4">
    <citation type="submission" date="2009-03" db="UniProtKB">
        <authorList>
            <person name="Bienvenut W.V."/>
            <person name="Waridel P."/>
            <person name="Quadroni M."/>
        </authorList>
    </citation>
    <scope>PROTEIN SEQUENCE OF 2-27; 33-56; 77-93; 101-115; 193-206; 209-236; 252-261 AND 266-303</scope>
    <scope>CLEAVAGE OF INITIATOR METHIONINE</scope>
    <scope>ACETYLATION AT SER-2</scope>
    <scope>IDENTIFICATION BY MASS SPECTROMETRY</scope>
    <source>
        <tissue>Cervix carcinoma</tissue>
    </source>
</reference>
<reference key="5">
    <citation type="submission" date="2010-01" db="UniProtKB">
        <authorList>
            <person name="Bienvenut W.V."/>
        </authorList>
    </citation>
    <scope>PROTEIN SEQUENCE OF 2-27; 33-56; 63-93; 101-115; 193-206; 209-261; 266-303; 344-375 AND 429-439</scope>
    <scope>CLEAVAGE OF INITIATOR METHIONINE</scope>
    <scope>ACETYLATION AT SER-2</scope>
    <scope>IDENTIFICATION BY MASS SPECTROMETRY</scope>
    <source>
        <tissue>Ovarian carcinoma</tissue>
    </source>
</reference>
<reference key="6">
    <citation type="journal article" date="1999" name="J. Cell. Biochem.">
        <title>Reassembling proteins and chaperones in human nuclear matrix protein fractions.</title>
        <authorList>
            <person name="Gerner C."/>
            <person name="Holzmann K."/>
            <person name="Meissner M."/>
            <person name="Gotzmann J."/>
            <person name="Grimm R."/>
            <person name="Sauermann G."/>
        </authorList>
    </citation>
    <scope>PROTEIN SEQUENCE OF 32-40</scope>
    <scope>TISSUE SPECIFICITY</scope>
    <source>
        <tissue>Peripheral blood</tissue>
    </source>
</reference>
<reference key="7">
    <citation type="journal article" date="2001" name="J. Biol. Chem.">
        <title>U box proteins as a new family of ubiquitin-protein ligases.</title>
        <authorList>
            <person name="Hatakeyama S."/>
            <person name="Yada M."/>
            <person name="Matsumoto M."/>
            <person name="Ishida N."/>
            <person name="Nakayama K.I."/>
        </authorList>
    </citation>
    <scope>FUNCTION</scope>
    <scope>CATALYTIC ACTIVITY</scope>
    <scope>PATHWAY</scope>
    <scope>SUBCELLULAR LOCATION</scope>
    <scope>TISSUE SPECIFICITY</scope>
</reference>
<reference key="8">
    <citation type="journal article" date="2002" name="Mol. Biol. Cell">
        <title>Functional proteomic analysis of human nucleolus.</title>
        <authorList>
            <person name="Scherl A."/>
            <person name="Coute Y."/>
            <person name="Deon C."/>
            <person name="Calle A."/>
            <person name="Kindbeiter K."/>
            <person name="Sanchez J.-C."/>
            <person name="Greco A."/>
            <person name="Hochstrasser D.F."/>
            <person name="Diaz J.-J."/>
        </authorList>
    </citation>
    <scope>SUBCELLULAR LOCATION [LARGE SCALE ANALYSIS]</scope>
    <source>
        <tissue>Cervix carcinoma</tissue>
    </source>
</reference>
<reference key="9">
    <citation type="journal article" date="2002" name="RNA">
        <title>Purification and characterization of native spliceosomes suitable for three-dimensional structural analysis.</title>
        <authorList>
            <person name="Jurica M.S."/>
            <person name="Licklider L.J."/>
            <person name="Gygi S.P."/>
            <person name="Grigorieff N."/>
            <person name="Moore M.J."/>
        </authorList>
    </citation>
    <scope>IDENTIFICATION BY MASS SPECTROMETRY</scope>
    <scope>IDENTIFICATION IN THE SPLICEOSOMAL C COMPLEX</scope>
</reference>
<reference key="10">
    <citation type="journal article" date="2005" name="Nucleic Acids Res.">
        <title>SNEV is an evolutionarily conserved splicing factor whose oligomerization is necessary for spliceosome assembly.</title>
        <authorList>
            <person name="Grillari J."/>
            <person name="Ajuh P."/>
            <person name="Stadler G."/>
            <person name="Loescher M."/>
            <person name="Voglauer R."/>
            <person name="Ernst W."/>
            <person name="Chusainow J."/>
            <person name="Eisenhaber F."/>
            <person name="Pokar M."/>
            <person name="Fortschegger K."/>
            <person name="Grey M."/>
            <person name="Lamond A.I."/>
            <person name="Katinger H."/>
        </authorList>
    </citation>
    <scope>FUNCTION</scope>
    <scope>SUBUNIT</scope>
</reference>
<reference key="11">
    <citation type="journal article" date="2005" name="Biochem. J.">
        <title>Interaction of U-box E3 ligase SNEV with PSMB4, the beta7 subunit of the 20 S proteasome.</title>
        <authorList>
            <person name="Loescher M."/>
            <person name="Fortschegger K."/>
            <person name="Ritter G."/>
            <person name="Wostry M."/>
            <person name="Voglauer R."/>
            <person name="Schmid J.A."/>
            <person name="Watters S."/>
            <person name="Rivett A.J."/>
            <person name="Ajuh P."/>
            <person name="Lamond A.I."/>
            <person name="Katinger H."/>
            <person name="Grillari J."/>
        </authorList>
    </citation>
    <scope>INTERACTION WITH PSMB4</scope>
    <scope>FUNCTION</scope>
</reference>
<reference key="12">
    <citation type="journal article" date="2005" name="J. Biol. Chem.">
        <title>The Pso4 mRNA splicing and DNA repair complex interacts with WRN for processing of DNA interstrand cross-links.</title>
        <authorList>
            <person name="Zhang N."/>
            <person name="Kaur R."/>
            <person name="Lu X."/>
            <person name="Shen X."/>
            <person name="Li L."/>
            <person name="Legerski R.J."/>
        </authorList>
    </citation>
    <scope>FUNCTION</scope>
    <scope>IDENTIFICATION AS A COMPONENT OF THE PSO4 COMPLEX</scope>
</reference>
<reference key="13">
    <citation type="journal article" date="2006" name="Exp. Cell Res.">
        <title>SNEV overexpression extends the life span of human endothelial cells.</title>
        <authorList>
            <person name="Voglauer R."/>
            <person name="Chang M.W.-F."/>
            <person name="Dampier B."/>
            <person name="Wieser M."/>
            <person name="Baumann K."/>
            <person name="Sterovsky T."/>
            <person name="Schreiber M."/>
            <person name="Katinger H."/>
            <person name="Grillari J."/>
        </authorList>
    </citation>
    <scope>FUNCTION</scope>
    <scope>TISSUE SPECIFICITY</scope>
</reference>
<reference key="14">
    <citation type="journal article" date="2007" name="Biochem. Biophys. Res. Commun.">
        <title>Mouse homologue of yeast Prp19 interacts with mouse SUG1, the regulatory subunit of 26S proteasome.</title>
        <authorList>
            <person name="Sihn C.R."/>
            <person name="Cho S.Y."/>
            <person name="Lee J.H."/>
            <person name="Lee T.R."/>
            <person name="Kim S.H."/>
        </authorList>
    </citation>
    <scope>FUNCTION</scope>
</reference>
<reference key="15">
    <citation type="journal article" date="2008" name="J. Biol. Chem.">
        <title>Isolation of XAB2 complex involved in pre-mRNA splicing, transcription, and transcription-coupled repair.</title>
        <authorList>
            <person name="Kuraoka I."/>
            <person name="Ito S."/>
            <person name="Wada T."/>
            <person name="Hayashida M."/>
            <person name="Lee L."/>
            <person name="Saijo M."/>
            <person name="Nakatsu Y."/>
            <person name="Matsumoto M."/>
            <person name="Matsunaga T."/>
            <person name="Handa H."/>
            <person name="Qin J."/>
            <person name="Nakatani Y."/>
            <person name="Tanaka K."/>
        </authorList>
    </citation>
    <scope>FUNCTION</scope>
    <scope>IDENTIFICATION AS PART OF THE XAB2 COMPLEX</scope>
</reference>
<reference key="16">
    <citation type="journal article" date="2008" name="J. Biol. Chem.">
        <title>Human Pso4 is a metnase (SETMAR)-binding partner that regulates metnase function in DNA repair.</title>
        <authorList>
            <person name="Beck B.D."/>
            <person name="Park S.J."/>
            <person name="Lee Y.J."/>
            <person name="Roman Y."/>
            <person name="Hromas R.A."/>
            <person name="Lee S.H."/>
        </authorList>
    </citation>
    <scope>FUNCTION</scope>
    <scope>INTERACTION WITH SETMAR</scope>
    <scope>SUBCELLULAR LOCATION</scope>
</reference>
<reference key="17">
    <citation type="journal article" date="2008" name="Proc. Natl. Acad. Sci. U.S.A.">
        <title>A quantitative atlas of mitotic phosphorylation.</title>
        <authorList>
            <person name="Dephoure N."/>
            <person name="Zhou C."/>
            <person name="Villen J."/>
            <person name="Beausoleil S.A."/>
            <person name="Bakalarski C.E."/>
            <person name="Elledge S.J."/>
            <person name="Gygi S.P."/>
        </authorList>
    </citation>
    <scope>IDENTIFICATION BY MASS SPECTROMETRY [LARGE SCALE ANALYSIS]</scope>
    <source>
        <tissue>Cervix carcinoma</tissue>
    </source>
</reference>
<reference key="18">
    <citation type="journal article" date="2009" name="Anal. Chem.">
        <title>Lys-N and trypsin cover complementary parts of the phosphoproteome in a refined SCX-based approach.</title>
        <authorList>
            <person name="Gauci S."/>
            <person name="Helbig A.O."/>
            <person name="Slijper M."/>
            <person name="Krijgsveld J."/>
            <person name="Heck A.J."/>
            <person name="Mohammed S."/>
        </authorList>
    </citation>
    <scope>ACETYLATION [LARGE SCALE ANALYSIS] AT SER-2</scope>
    <scope>CLEAVAGE OF INITIATOR METHIONINE [LARGE SCALE ANALYSIS]</scope>
    <scope>IDENTIFICATION BY MASS SPECTROMETRY [LARGE SCALE ANALYSIS]</scope>
</reference>
<reference key="19">
    <citation type="journal article" date="2009" name="J. Biol. Chem.">
        <title>Blom7alpha is a novel heterogeneous nuclear ribonucleoprotein K homology domain protein involved in pre-mRNA splicing that interacts with SNEVPrp19-Pso4.</title>
        <authorList>
            <person name="Grillari J."/>
            <person name="Loescher M."/>
            <person name="Denegri M."/>
            <person name="Lee K."/>
            <person name="Fortschegger K."/>
            <person name="Eisenhaber F."/>
            <person name="Ajuh P."/>
            <person name="Lamond A.I."/>
            <person name="Katinger H."/>
            <person name="Grillari-Voglauer R."/>
        </authorList>
    </citation>
    <scope>SUBUNIT</scope>
    <scope>INTERACTION WITH KHDC4</scope>
</reference>
<reference key="20">
    <citation type="journal article" date="2009" name="Mol. Cell. Biol.">
        <title>APE1/Ref-1 interacts with NPM1 within nucleoli and plays a role in the rRNA quality control process.</title>
        <authorList>
            <person name="Vascotto C."/>
            <person name="Fantini D."/>
            <person name="Romanello M."/>
            <person name="Cesaratto L."/>
            <person name="Deganuto M."/>
            <person name="Leonardi A."/>
            <person name="Radicella J.P."/>
            <person name="Kelley M.R."/>
            <person name="D'Ambrosio C."/>
            <person name="Scaloni A."/>
            <person name="Quadrifoglio F."/>
            <person name="Tell G."/>
        </authorList>
    </citation>
    <scope>INTERACTION WITH APEX1</scope>
    <scope>IDENTIFICATION BY MASS SPECTROMETRY</scope>
    <scope>SUBCELLULAR LOCATION</scope>
</reference>
<reference key="21">
    <citation type="journal article" date="2009" name="Science">
        <title>Lysine acetylation targets protein complexes and co-regulates major cellular functions.</title>
        <authorList>
            <person name="Choudhary C."/>
            <person name="Kumar C."/>
            <person name="Gnad F."/>
            <person name="Nielsen M.L."/>
            <person name="Rehman M."/>
            <person name="Walther T.C."/>
            <person name="Olsen J.V."/>
            <person name="Mann M."/>
        </authorList>
    </citation>
    <scope>ACETYLATION [LARGE SCALE ANALYSIS] AT LYS-122 AND LYS-261</scope>
    <scope>IDENTIFICATION BY MASS SPECTROMETRY [LARGE SCALE ANALYSIS]</scope>
</reference>
<reference key="22">
    <citation type="journal article" date="2010" name="Genes Dev.">
        <title>The Prp19 complex and the Usp4Sart3 deubiquitinating enzyme control reversible ubiquitination at the spliceosome.</title>
        <authorList>
            <person name="Song E.J."/>
            <person name="Werner S.L."/>
            <person name="Neubauer J."/>
            <person name="Stegmeier F."/>
            <person name="Aspden J."/>
            <person name="Rio D."/>
            <person name="Harper J.W."/>
            <person name="Elledge S.J."/>
            <person name="Kirschner M.W."/>
            <person name="Rape M."/>
        </authorList>
    </citation>
    <scope>FUNCTION</scope>
    <scope>INTERACTION WITH PRPF3</scope>
</reference>
<reference key="23">
    <citation type="journal article" date="2010" name="Mol. Cell. Biol.">
        <title>Molecular architecture of the human Prp19/CDC5L complex.</title>
        <authorList>
            <person name="Grote M."/>
            <person name="Wolf E."/>
            <person name="Will C.L."/>
            <person name="Lemm I."/>
            <person name="Agafonov D.E."/>
            <person name="Schomburg A."/>
            <person name="Fischle W."/>
            <person name="Urlaub H."/>
            <person name="Luhrmann R."/>
        </authorList>
    </citation>
    <scope>IDENTIFICATION AS A COMPONENT OF THE PRP19-CDC5L SPLICING COMPLEX</scope>
    <scope>IDENTIFICATION BY MASS SPECTROMETRY</scope>
    <scope>SUBCELLULAR LOCATION</scope>
    <scope>INTERACTION WITH CDC5L; PLRG1 AND BCAS2</scope>
</reference>
<reference key="24">
    <citation type="journal article" date="2011" name="BMC Syst. Biol.">
        <title>Initial characterization of the human central proteome.</title>
        <authorList>
            <person name="Burkard T.R."/>
            <person name="Planyavsky M."/>
            <person name="Kaupe I."/>
            <person name="Breitwieser F.P."/>
            <person name="Buerckstuemmer T."/>
            <person name="Bennett K.L."/>
            <person name="Superti-Furga G."/>
            <person name="Colinge J."/>
        </authorList>
    </citation>
    <scope>IDENTIFICATION BY MASS SPECTROMETRY [LARGE SCALE ANALYSIS]</scope>
</reference>
<reference key="25">
    <citation type="journal article" date="2011" name="Genes Dev.">
        <title>The RNA polymerase II C-terminal domain promotes splicing activation through recruitment of a U2AF65-Prp19 complex.</title>
        <authorList>
            <person name="David C.J."/>
            <person name="Boyne A.R."/>
            <person name="Millhouse S.R."/>
            <person name="Manley J.L."/>
        </authorList>
    </citation>
    <scope>FUNCTION</scope>
    <scope>INTERACTION WITH U2AF2</scope>
</reference>
<reference key="26">
    <citation type="journal article" date="2012" name="Cell Rep.">
        <title>Mpn1, mutated in poikiloderma with neutropenia protein 1, is a conserved 3'-to-5' RNA exonuclease processing U6 small nuclear RNA.</title>
        <authorList>
            <person name="Shchepachev V."/>
            <person name="Wischnewski H."/>
            <person name="Missiaglia E."/>
            <person name="Soneson C."/>
            <person name="Azzalin C.M."/>
        </authorList>
    </citation>
    <scope>INTERACTION WITH USB1</scope>
</reference>
<reference key="27">
    <citation type="journal article" date="2012" name="Mol. Cell. Proteomics">
        <title>Comparative large-scale characterisation of plant vs. mammal proteins reveals similar and idiosyncratic N-alpha acetylation features.</title>
        <authorList>
            <person name="Bienvenut W.V."/>
            <person name="Sumpton D."/>
            <person name="Martinez A."/>
            <person name="Lilla S."/>
            <person name="Espagne C."/>
            <person name="Meinnel T."/>
            <person name="Giglione C."/>
        </authorList>
    </citation>
    <scope>ACETYLATION [LARGE SCALE ANALYSIS] AT SER-2</scope>
    <scope>CLEAVAGE OF INITIATOR METHIONINE [LARGE SCALE ANALYSIS]</scope>
    <scope>IDENTIFICATION BY MASS SPECTROMETRY [LARGE SCALE ANALYSIS]</scope>
</reference>
<reference key="28">
    <citation type="journal article" date="2012" name="Nat. Struct. Mol. Biol.">
        <title>Human CWC22 escorts the helicase eIF4AIII to spliceosomes and promotes exon junction complex assembly.</title>
        <authorList>
            <person name="Barbosa I."/>
            <person name="Haque N."/>
            <person name="Fiorini F."/>
            <person name="Barrandon C."/>
            <person name="Tomasetto C."/>
            <person name="Blanchette M."/>
            <person name="Le Hir H."/>
        </authorList>
    </citation>
    <scope>INTERACTION WITH CWC22 AND EIF4A3</scope>
</reference>
<reference key="29">
    <citation type="journal article" date="2014" name="Mol. Cell">
        <title>PRP19 transforms into a sensor of RPA-ssDNA after DNA damage and drives ATR activation via a ubiquitin-mediated circuitry.</title>
        <authorList>
            <person name="Marechal A."/>
            <person name="Li J.M."/>
            <person name="Ji X.Y."/>
            <person name="Wu C.S."/>
            <person name="Yazinski S.A."/>
            <person name="Nguyen H.D."/>
            <person name="Liu S."/>
            <person name="Jimenez A.E."/>
            <person name="Jin J."/>
            <person name="Zou L."/>
        </authorList>
    </citation>
    <scope>FUNCTION</scope>
    <scope>INTERACTION WITH RPA1 AND RPA2</scope>
    <scope>DOMAIN</scope>
    <scope>MUTAGENESIS OF TYR-405</scope>
</reference>
<reference key="30">
    <citation type="journal article" date="2014" name="PLoS ONE">
        <title>Small kinetochore associated protein (SKAP) promotes UV-induced cell apoptosis through negatively regulating pre-mRNA processing factor 19 (Prp19).</title>
        <authorList>
            <person name="Lu S."/>
            <person name="Wang R."/>
            <person name="Cai C."/>
            <person name="Liang J."/>
            <person name="Xu L."/>
            <person name="Miao S."/>
            <person name="Wang L."/>
            <person name="Song W."/>
        </authorList>
    </citation>
    <scope>INTERACTION WITH KNSTRN</scope>
</reference>
<reference key="31">
    <citation type="journal article" date="2022" name="Leukemia">
        <title>DDX41 coordinates RNA splicing and transcriptional elongation to prevent DNA replication stress in hematopoietic cells.</title>
        <authorList>
            <person name="Shinriki S."/>
            <person name="Hirayama M."/>
            <person name="Nagamachi A."/>
            <person name="Yokoyama A."/>
            <person name="Kawamura T."/>
            <person name="Kanai A."/>
            <person name="Kawai H."/>
            <person name="Iwakiri J."/>
            <person name="Liu R."/>
            <person name="Maeshiro M."/>
            <person name="Tungalag S."/>
            <person name="Tasaki M."/>
            <person name="Ueda M."/>
            <person name="Tomizawa K."/>
            <person name="Kataoka N."/>
            <person name="Ideue T."/>
            <person name="Suzuki Y."/>
            <person name="Asai K."/>
            <person name="Tani T."/>
            <person name="Inaba T."/>
            <person name="Matsui H."/>
        </authorList>
    </citation>
    <scope>INTERACTION WITH DDX41</scope>
</reference>
<reference evidence="41" key="32">
    <citation type="journal article" date="2017" name="Biochem. Biophys. Res. Commun.">
        <title>Crystal structure of the WD40 domain of human PRPF19.</title>
        <authorList>
            <person name="Zhang Y."/>
            <person name="Li Y."/>
            <person name="Liang X."/>
            <person name="Zhu Z."/>
            <person name="Sun H."/>
            <person name="He H."/>
            <person name="Min J."/>
            <person name="Liao S."/>
            <person name="Liu Y."/>
        </authorList>
    </citation>
    <scope>X-RAY CRYSTALLOGRAPHY (1.89 ANGSTROMS) OF 169-504</scope>
</reference>
<reference evidence="43" key="33">
    <citation type="journal article" date="2017" name="Cell">
        <title>An Atomic Structure of the Human Spliceosome.</title>
        <authorList>
            <person name="Zhang X."/>
            <person name="Yan C."/>
            <person name="Hang J."/>
            <person name="Finci L.I."/>
            <person name="Lei J."/>
            <person name="Shi Y."/>
        </authorList>
    </citation>
    <scope>STRUCTURE BY ELECTRON MICROSCOPY (3.60 ANGSTROMS)</scope>
    <scope>FUNCTION</scope>
    <scope>SUBUNIT</scope>
    <scope>SUBCELLULAR LOCATION</scope>
</reference>
<reference evidence="42" key="34">
    <citation type="journal article" date="2017" name="Nature">
        <title>Cryo-EM structure of a human spliceosome activated for step 2 of splicing.</title>
        <authorList>
            <person name="Bertram K."/>
            <person name="Agafonov D.E."/>
            <person name="Liu W.T."/>
            <person name="Dybkov O."/>
            <person name="Will C.L."/>
            <person name="Hartmuth K."/>
            <person name="Urlaub H."/>
            <person name="Kastner B."/>
            <person name="Stark H."/>
            <person name="Luhrmann R."/>
        </authorList>
    </citation>
    <scope>STRUCTURE BY ELECTRON MICROSCOPY (5.90 ANGSTROMS)</scope>
    <scope>FUNCTION</scope>
    <scope>SUBUNIT</scope>
    <scope>SUBCELLULAR LOCATION</scope>
</reference>
<reference evidence="45 46" key="35">
    <citation type="journal article" date="2018" name="Cell Res.">
        <title>Structure of the human activated spliceosome in three conformational states.</title>
        <authorList>
            <person name="Zhang X."/>
            <person name="Yan C."/>
            <person name="Zhan X."/>
            <person name="Li L."/>
            <person name="Lei J."/>
            <person name="Shi Y."/>
        </authorList>
    </citation>
    <scope>STRUCTURE BY ELECTRON MICROSCOPY (5.10 ANGSTROMS)</scope>
    <scope>FUNCTION</scope>
    <scope>SUBUNIT</scope>
    <scope>SUBCELLULAR LOCATION</scope>
</reference>
<reference evidence="44" key="36">
    <citation type="journal article" date="2018" name="Science">
        <title>Structure of a human catalytic step I spliceosome.</title>
        <authorList>
            <person name="Zhan X."/>
            <person name="Yan C."/>
            <person name="Zhang X."/>
            <person name="Lei J."/>
            <person name="Shi Y."/>
        </authorList>
    </citation>
    <scope>STRUCTURE BY ELECTRON MICROSCOPY (4.10 ANGSTROMS)</scope>
    <scope>FUNCTION</scope>
    <scope>SUBUNIT</scope>
    <scope>SUBCELLULAR LOCATION</scope>
</reference>
<reference evidence="47" key="37">
    <citation type="journal article" date="2019" name="Science">
        <title>A human postcatalytic spliceosome structure reveals essential roles of metazoan factors for exon ligation.</title>
        <authorList>
            <person name="Fica S.M."/>
            <person name="Oubridge C."/>
            <person name="Wilkinson M.E."/>
            <person name="Newman A.J."/>
            <person name="Nagai K."/>
        </authorList>
    </citation>
    <scope>STRUCTURE BY ELECTRON MICROSCOPY (3.30 ANGSTROMS)</scope>
    <scope>FUNCTION</scope>
    <scope>SUBUNIT</scope>
    <scope>SUBCELLULAR LOCATION</scope>
</reference>
<organism>
    <name type="scientific">Homo sapiens</name>
    <name type="common">Human</name>
    <dbReference type="NCBI Taxonomy" id="9606"/>
    <lineage>
        <taxon>Eukaryota</taxon>
        <taxon>Metazoa</taxon>
        <taxon>Chordata</taxon>
        <taxon>Craniata</taxon>
        <taxon>Vertebrata</taxon>
        <taxon>Euteleostomi</taxon>
        <taxon>Mammalia</taxon>
        <taxon>Eutheria</taxon>
        <taxon>Euarchontoglires</taxon>
        <taxon>Primates</taxon>
        <taxon>Haplorrhini</taxon>
        <taxon>Catarrhini</taxon>
        <taxon>Hominidae</taxon>
        <taxon>Homo</taxon>
    </lineage>
</organism>
<proteinExistence type="evidence at protein level"/>